<comment type="function">
    <text evidence="1">Specifically methylates the N7 position of a guanine in 16S rRNA.</text>
</comment>
<comment type="subcellular location">
    <subcellularLocation>
        <location evidence="1">Cytoplasm</location>
    </subcellularLocation>
</comment>
<comment type="similarity">
    <text evidence="1">Belongs to the methyltransferase superfamily. RNA methyltransferase RsmG family.</text>
</comment>
<feature type="chain" id="PRO_1000075218" description="Ribosomal RNA small subunit methyltransferase G">
    <location>
        <begin position="1"/>
        <end position="237"/>
    </location>
</feature>
<feature type="binding site" evidence="1">
    <location>
        <position position="78"/>
    </location>
    <ligand>
        <name>S-adenosyl-L-methionine</name>
        <dbReference type="ChEBI" id="CHEBI:59789"/>
    </ligand>
</feature>
<feature type="binding site" evidence="1">
    <location>
        <position position="83"/>
    </location>
    <ligand>
        <name>S-adenosyl-L-methionine</name>
        <dbReference type="ChEBI" id="CHEBI:59789"/>
    </ligand>
</feature>
<feature type="binding site" evidence="1">
    <location>
        <begin position="129"/>
        <end position="130"/>
    </location>
    <ligand>
        <name>S-adenosyl-L-methionine</name>
        <dbReference type="ChEBI" id="CHEBI:59789"/>
    </ligand>
</feature>
<feature type="binding site" evidence="1">
    <location>
        <position position="148"/>
    </location>
    <ligand>
        <name>S-adenosyl-L-methionine</name>
        <dbReference type="ChEBI" id="CHEBI:59789"/>
    </ligand>
</feature>
<accession>A5N449</accession>
<sequence>MDYFEIMDTVCKDLGLNFNQEKYNKFIKYKDILKLWNDKMNLTAIVDDKDIIKKHFIDSIRVFKFLPLKDAKSIIDVGTGAGFPGIPIKIIKPEVKLILLDSLNKRIKFLNQVVLSIKLNDVTCIHGRAEDCARKIEYRENNDVVVSRAVANLTVLSEFCIPYIKVGGYFIAMKGPSVEDEITESKNAINILGGKIEDIIKVEDDEFNHNLVVIKKITHTSDKYPRKAGIVSKNPLR</sequence>
<dbReference type="EC" id="2.1.1.-" evidence="1"/>
<dbReference type="EMBL" id="CP000673">
    <property type="protein sequence ID" value="EDK35895.1"/>
    <property type="molecule type" value="Genomic_DNA"/>
</dbReference>
<dbReference type="RefSeq" id="WP_012104232.1">
    <property type="nucleotide sequence ID" value="NC_009706.1"/>
</dbReference>
<dbReference type="SMR" id="A5N449"/>
<dbReference type="STRING" id="431943.CKL_3919"/>
<dbReference type="KEGG" id="ckl:CKL_3919"/>
<dbReference type="eggNOG" id="COG0357">
    <property type="taxonomic scope" value="Bacteria"/>
</dbReference>
<dbReference type="HOGENOM" id="CLU_065341_0_0_9"/>
<dbReference type="Proteomes" id="UP000002411">
    <property type="component" value="Chromosome"/>
</dbReference>
<dbReference type="GO" id="GO:0005829">
    <property type="term" value="C:cytosol"/>
    <property type="evidence" value="ECO:0007669"/>
    <property type="project" value="TreeGrafter"/>
</dbReference>
<dbReference type="GO" id="GO:0070043">
    <property type="term" value="F:rRNA (guanine-N7-)-methyltransferase activity"/>
    <property type="evidence" value="ECO:0007669"/>
    <property type="project" value="UniProtKB-UniRule"/>
</dbReference>
<dbReference type="FunFam" id="3.40.50.150:FF:000041">
    <property type="entry name" value="Ribosomal RNA small subunit methyltransferase G"/>
    <property type="match status" value="1"/>
</dbReference>
<dbReference type="Gene3D" id="3.40.50.150">
    <property type="entry name" value="Vaccinia Virus protein VP39"/>
    <property type="match status" value="1"/>
</dbReference>
<dbReference type="HAMAP" id="MF_00074">
    <property type="entry name" value="16SrRNA_methyltr_G"/>
    <property type="match status" value="1"/>
</dbReference>
<dbReference type="InterPro" id="IPR003682">
    <property type="entry name" value="rRNA_ssu_MeTfrase_G"/>
</dbReference>
<dbReference type="InterPro" id="IPR029063">
    <property type="entry name" value="SAM-dependent_MTases_sf"/>
</dbReference>
<dbReference type="NCBIfam" id="TIGR00138">
    <property type="entry name" value="rsmG_gidB"/>
    <property type="match status" value="1"/>
</dbReference>
<dbReference type="PANTHER" id="PTHR31760">
    <property type="entry name" value="S-ADENOSYL-L-METHIONINE-DEPENDENT METHYLTRANSFERASES SUPERFAMILY PROTEIN"/>
    <property type="match status" value="1"/>
</dbReference>
<dbReference type="PANTHER" id="PTHR31760:SF0">
    <property type="entry name" value="S-ADENOSYL-L-METHIONINE-DEPENDENT METHYLTRANSFERASES SUPERFAMILY PROTEIN"/>
    <property type="match status" value="1"/>
</dbReference>
<dbReference type="Pfam" id="PF02527">
    <property type="entry name" value="GidB"/>
    <property type="match status" value="1"/>
</dbReference>
<dbReference type="PIRSF" id="PIRSF003078">
    <property type="entry name" value="GidB"/>
    <property type="match status" value="1"/>
</dbReference>
<dbReference type="SUPFAM" id="SSF53335">
    <property type="entry name" value="S-adenosyl-L-methionine-dependent methyltransferases"/>
    <property type="match status" value="1"/>
</dbReference>
<reference key="1">
    <citation type="journal article" date="2008" name="Proc. Natl. Acad. Sci. U.S.A.">
        <title>The genome of Clostridium kluyveri, a strict anaerobe with unique metabolic features.</title>
        <authorList>
            <person name="Seedorf H."/>
            <person name="Fricke W.F."/>
            <person name="Veith B."/>
            <person name="Brueggemann H."/>
            <person name="Liesegang H."/>
            <person name="Strittmatter A."/>
            <person name="Miethke M."/>
            <person name="Buckel W."/>
            <person name="Hinderberger J."/>
            <person name="Li F."/>
            <person name="Hagemeier C."/>
            <person name="Thauer R.K."/>
            <person name="Gottschalk G."/>
        </authorList>
    </citation>
    <scope>NUCLEOTIDE SEQUENCE [LARGE SCALE GENOMIC DNA]</scope>
    <source>
        <strain>ATCC 8527 / DSM 555 / NBRC 12016 / NCIMB 10680 / K1</strain>
    </source>
</reference>
<proteinExistence type="inferred from homology"/>
<keyword id="KW-0963">Cytoplasm</keyword>
<keyword id="KW-0489">Methyltransferase</keyword>
<keyword id="KW-1185">Reference proteome</keyword>
<keyword id="KW-0698">rRNA processing</keyword>
<keyword id="KW-0949">S-adenosyl-L-methionine</keyword>
<keyword id="KW-0808">Transferase</keyword>
<name>RSMG_CLOK5</name>
<protein>
    <recommendedName>
        <fullName evidence="1">Ribosomal RNA small subunit methyltransferase G</fullName>
        <ecNumber evidence="1">2.1.1.-</ecNumber>
    </recommendedName>
    <alternativeName>
        <fullName evidence="1">16S rRNA 7-methylguanosine methyltransferase</fullName>
        <shortName evidence="1">16S rRNA m7G methyltransferase</shortName>
    </alternativeName>
</protein>
<organism>
    <name type="scientific">Clostridium kluyveri (strain ATCC 8527 / DSM 555 / NBRC 12016 / NCIMB 10680 / K1)</name>
    <dbReference type="NCBI Taxonomy" id="431943"/>
    <lineage>
        <taxon>Bacteria</taxon>
        <taxon>Bacillati</taxon>
        <taxon>Bacillota</taxon>
        <taxon>Clostridia</taxon>
        <taxon>Eubacteriales</taxon>
        <taxon>Clostridiaceae</taxon>
        <taxon>Clostridium</taxon>
    </lineage>
</organism>
<evidence type="ECO:0000255" key="1">
    <source>
        <dbReference type="HAMAP-Rule" id="MF_00074"/>
    </source>
</evidence>
<gene>
    <name evidence="1" type="primary">rsmG</name>
    <name type="ordered locus">CKL_3919</name>
</gene>